<proteinExistence type="inferred from homology"/>
<accession>A6V707</accession>
<sequence length="258" mass="28943">MIQIDALPAFNDNYIWLLQDATSRRCAVVDPGDARPVEAWLAAHPDWRLSDILVTHHHHDHVGGVAALKELSGARVLGPANEKIPARDLALEDGERVEVLGLVFEIFHVPGHTLGHIAYYHAAQTPLLFCGDTLFAAGCGRLFEGTPAQMHRSLARLAALPANTRVYCTHEYTLSNLRFALAVEPENQALRERFEEATRLRERDRITLPSEISLELSTNPFLRVSENSVKKKADQRSGQQNRTPEEVFAVLRAWKDQF</sequence>
<reference key="1">
    <citation type="submission" date="2007-06" db="EMBL/GenBank/DDBJ databases">
        <authorList>
            <person name="Dodson R.J."/>
            <person name="Harkins D."/>
            <person name="Paulsen I.T."/>
        </authorList>
    </citation>
    <scope>NUCLEOTIDE SEQUENCE [LARGE SCALE GENOMIC DNA]</scope>
    <source>
        <strain>DSM 24068 / PA7</strain>
    </source>
</reference>
<name>GLO2_PSEP7</name>
<evidence type="ECO:0000255" key="1">
    <source>
        <dbReference type="HAMAP-Rule" id="MF_01374"/>
    </source>
</evidence>
<keyword id="KW-0378">Hydrolase</keyword>
<keyword id="KW-0479">Metal-binding</keyword>
<keyword id="KW-0862">Zinc</keyword>
<feature type="chain" id="PRO_1000144779" description="Hydroxyacylglutathione hydrolase">
    <location>
        <begin position="1"/>
        <end position="258"/>
    </location>
</feature>
<feature type="binding site" evidence="1">
    <location>
        <position position="56"/>
    </location>
    <ligand>
        <name>Zn(2+)</name>
        <dbReference type="ChEBI" id="CHEBI:29105"/>
        <label>1</label>
    </ligand>
</feature>
<feature type="binding site" evidence="1">
    <location>
        <position position="58"/>
    </location>
    <ligand>
        <name>Zn(2+)</name>
        <dbReference type="ChEBI" id="CHEBI:29105"/>
        <label>1</label>
    </ligand>
</feature>
<feature type="binding site" evidence="1">
    <location>
        <position position="60"/>
    </location>
    <ligand>
        <name>Zn(2+)</name>
        <dbReference type="ChEBI" id="CHEBI:29105"/>
        <label>2</label>
    </ligand>
</feature>
<feature type="binding site" evidence="1">
    <location>
        <position position="61"/>
    </location>
    <ligand>
        <name>Zn(2+)</name>
        <dbReference type="ChEBI" id="CHEBI:29105"/>
        <label>2</label>
    </ligand>
</feature>
<feature type="binding site" evidence="1">
    <location>
        <position position="112"/>
    </location>
    <ligand>
        <name>Zn(2+)</name>
        <dbReference type="ChEBI" id="CHEBI:29105"/>
        <label>1</label>
    </ligand>
</feature>
<feature type="binding site" evidence="1">
    <location>
        <position position="132"/>
    </location>
    <ligand>
        <name>Zn(2+)</name>
        <dbReference type="ChEBI" id="CHEBI:29105"/>
        <label>1</label>
    </ligand>
</feature>
<feature type="binding site" evidence="1">
    <location>
        <position position="132"/>
    </location>
    <ligand>
        <name>Zn(2+)</name>
        <dbReference type="ChEBI" id="CHEBI:29105"/>
        <label>2</label>
    </ligand>
</feature>
<feature type="binding site" evidence="1">
    <location>
        <position position="170"/>
    </location>
    <ligand>
        <name>Zn(2+)</name>
        <dbReference type="ChEBI" id="CHEBI:29105"/>
        <label>2</label>
    </ligand>
</feature>
<protein>
    <recommendedName>
        <fullName evidence="1">Hydroxyacylglutathione hydrolase</fullName>
        <ecNumber evidence="1">3.1.2.6</ecNumber>
    </recommendedName>
    <alternativeName>
        <fullName evidence="1">Glyoxalase II</fullName>
        <shortName evidence="1">Glx II</shortName>
    </alternativeName>
</protein>
<organism>
    <name type="scientific">Pseudomonas paraeruginosa (strain DSM 24068 / PA7)</name>
    <name type="common">Pseudomonas aeruginosa (strain PA7)</name>
    <dbReference type="NCBI Taxonomy" id="381754"/>
    <lineage>
        <taxon>Bacteria</taxon>
        <taxon>Pseudomonadati</taxon>
        <taxon>Pseudomonadota</taxon>
        <taxon>Gammaproteobacteria</taxon>
        <taxon>Pseudomonadales</taxon>
        <taxon>Pseudomonadaceae</taxon>
        <taxon>Pseudomonas</taxon>
        <taxon>Pseudomonas paraeruginosa</taxon>
    </lineage>
</organism>
<comment type="function">
    <text evidence="1">Thiolesterase that catalyzes the hydrolysis of S-D-lactoyl-glutathione to form glutathione and D-lactic acid.</text>
</comment>
<comment type="catalytic activity">
    <reaction evidence="1">
        <text>an S-(2-hydroxyacyl)glutathione + H2O = a 2-hydroxy carboxylate + glutathione + H(+)</text>
        <dbReference type="Rhea" id="RHEA:21864"/>
        <dbReference type="ChEBI" id="CHEBI:15377"/>
        <dbReference type="ChEBI" id="CHEBI:15378"/>
        <dbReference type="ChEBI" id="CHEBI:57925"/>
        <dbReference type="ChEBI" id="CHEBI:58896"/>
        <dbReference type="ChEBI" id="CHEBI:71261"/>
        <dbReference type="EC" id="3.1.2.6"/>
    </reaction>
</comment>
<comment type="cofactor">
    <cofactor evidence="1">
        <name>Zn(2+)</name>
        <dbReference type="ChEBI" id="CHEBI:29105"/>
    </cofactor>
    <text evidence="1">Binds 2 Zn(2+) ions per subunit.</text>
</comment>
<comment type="pathway">
    <text evidence="1">Secondary metabolite metabolism; methylglyoxal degradation; (R)-lactate from methylglyoxal: step 2/2.</text>
</comment>
<comment type="subunit">
    <text evidence="1">Monomer.</text>
</comment>
<comment type="similarity">
    <text evidence="1">Belongs to the metallo-beta-lactamase superfamily. Glyoxalase II family.</text>
</comment>
<dbReference type="EC" id="3.1.2.6" evidence="1"/>
<dbReference type="EMBL" id="CP000744">
    <property type="protein sequence ID" value="ABR86647.1"/>
    <property type="molecule type" value="Genomic_DNA"/>
</dbReference>
<dbReference type="RefSeq" id="WP_012076164.1">
    <property type="nucleotide sequence ID" value="NC_009656.1"/>
</dbReference>
<dbReference type="SMR" id="A6V707"/>
<dbReference type="GeneID" id="77221596"/>
<dbReference type="KEGG" id="pap:PSPA7_3483"/>
<dbReference type="HOGENOM" id="CLU_030571_4_1_6"/>
<dbReference type="UniPathway" id="UPA00619">
    <property type="reaction ID" value="UER00676"/>
</dbReference>
<dbReference type="Proteomes" id="UP000001582">
    <property type="component" value="Chromosome"/>
</dbReference>
<dbReference type="GO" id="GO:0004416">
    <property type="term" value="F:hydroxyacylglutathione hydrolase activity"/>
    <property type="evidence" value="ECO:0007669"/>
    <property type="project" value="UniProtKB-UniRule"/>
</dbReference>
<dbReference type="GO" id="GO:0046872">
    <property type="term" value="F:metal ion binding"/>
    <property type="evidence" value="ECO:0007669"/>
    <property type="project" value="UniProtKB-KW"/>
</dbReference>
<dbReference type="GO" id="GO:0019243">
    <property type="term" value="P:methylglyoxal catabolic process to D-lactate via S-lactoyl-glutathione"/>
    <property type="evidence" value="ECO:0007669"/>
    <property type="project" value="InterPro"/>
</dbReference>
<dbReference type="CDD" id="cd07723">
    <property type="entry name" value="hydroxyacylglutathione_hydrolase_MBL-fold"/>
    <property type="match status" value="1"/>
</dbReference>
<dbReference type="Gene3D" id="3.60.15.10">
    <property type="entry name" value="Ribonuclease Z/Hydroxyacylglutathione hydrolase-like"/>
    <property type="match status" value="1"/>
</dbReference>
<dbReference type="HAMAP" id="MF_01374">
    <property type="entry name" value="Glyoxalase_2"/>
    <property type="match status" value="1"/>
</dbReference>
<dbReference type="InterPro" id="IPR035680">
    <property type="entry name" value="Clx_II_MBL"/>
</dbReference>
<dbReference type="InterPro" id="IPR050110">
    <property type="entry name" value="Glyoxalase_II_hydrolase"/>
</dbReference>
<dbReference type="InterPro" id="IPR032282">
    <property type="entry name" value="HAGH_C"/>
</dbReference>
<dbReference type="InterPro" id="IPR017782">
    <property type="entry name" value="Hydroxyacylglutathione_Hdrlase"/>
</dbReference>
<dbReference type="InterPro" id="IPR001279">
    <property type="entry name" value="Metallo-B-lactamas"/>
</dbReference>
<dbReference type="InterPro" id="IPR036866">
    <property type="entry name" value="RibonucZ/Hydroxyglut_hydro"/>
</dbReference>
<dbReference type="NCBIfam" id="TIGR03413">
    <property type="entry name" value="GSH_gloB"/>
    <property type="match status" value="1"/>
</dbReference>
<dbReference type="PANTHER" id="PTHR43705">
    <property type="entry name" value="HYDROXYACYLGLUTATHIONE HYDROLASE"/>
    <property type="match status" value="1"/>
</dbReference>
<dbReference type="PANTHER" id="PTHR43705:SF1">
    <property type="entry name" value="HYDROXYACYLGLUTATHIONE HYDROLASE GLOB"/>
    <property type="match status" value="1"/>
</dbReference>
<dbReference type="Pfam" id="PF16123">
    <property type="entry name" value="HAGH_C"/>
    <property type="match status" value="1"/>
</dbReference>
<dbReference type="Pfam" id="PF00753">
    <property type="entry name" value="Lactamase_B"/>
    <property type="match status" value="1"/>
</dbReference>
<dbReference type="PIRSF" id="PIRSF005457">
    <property type="entry name" value="Glx"/>
    <property type="match status" value="1"/>
</dbReference>
<dbReference type="SMART" id="SM00849">
    <property type="entry name" value="Lactamase_B"/>
    <property type="match status" value="1"/>
</dbReference>
<dbReference type="SUPFAM" id="SSF56281">
    <property type="entry name" value="Metallo-hydrolase/oxidoreductase"/>
    <property type="match status" value="1"/>
</dbReference>
<gene>
    <name evidence="1" type="primary">gloB</name>
    <name type="ordered locus">PSPA7_3483</name>
</gene>